<protein>
    <recommendedName>
        <fullName evidence="1">YcgL domain-containing protein Sbal223_2423</fullName>
    </recommendedName>
</protein>
<evidence type="ECO:0000255" key="1">
    <source>
        <dbReference type="HAMAP-Rule" id="MF_01866"/>
    </source>
</evidence>
<accession>B8E7F9</accession>
<sequence>MLCAVYKSSRKADTYLFVKKRDCFDDVPAPLMEMFGVPKLVMVFPIAKRDALGMADIQKVRAAMEENGFYLQIPPPQVNLLAEHKLSLGIKD</sequence>
<gene>
    <name type="ordered locus">Sbal223_2423</name>
</gene>
<dbReference type="EMBL" id="CP001252">
    <property type="protein sequence ID" value="ACK46918.1"/>
    <property type="molecule type" value="Genomic_DNA"/>
</dbReference>
<dbReference type="RefSeq" id="WP_006081364.1">
    <property type="nucleotide sequence ID" value="NC_011663.1"/>
</dbReference>
<dbReference type="SMR" id="B8E7F9"/>
<dbReference type="KEGG" id="sbp:Sbal223_2423"/>
<dbReference type="HOGENOM" id="CLU_155118_1_0_6"/>
<dbReference type="Proteomes" id="UP000002507">
    <property type="component" value="Chromosome"/>
</dbReference>
<dbReference type="Gene3D" id="3.10.510.20">
    <property type="entry name" value="YcgL domain"/>
    <property type="match status" value="1"/>
</dbReference>
<dbReference type="HAMAP" id="MF_01866">
    <property type="entry name" value="UPF0745"/>
    <property type="match status" value="1"/>
</dbReference>
<dbReference type="InterPro" id="IPR038068">
    <property type="entry name" value="YcgL-like_sf"/>
</dbReference>
<dbReference type="InterPro" id="IPR027354">
    <property type="entry name" value="YcgL_dom"/>
</dbReference>
<dbReference type="PANTHER" id="PTHR38109">
    <property type="entry name" value="PROTEIN YCGL"/>
    <property type="match status" value="1"/>
</dbReference>
<dbReference type="PANTHER" id="PTHR38109:SF1">
    <property type="entry name" value="PROTEIN YCGL"/>
    <property type="match status" value="1"/>
</dbReference>
<dbReference type="Pfam" id="PF05166">
    <property type="entry name" value="YcgL"/>
    <property type="match status" value="1"/>
</dbReference>
<dbReference type="SUPFAM" id="SSF160191">
    <property type="entry name" value="YcgL-like"/>
    <property type="match status" value="1"/>
</dbReference>
<dbReference type="PROSITE" id="PS51648">
    <property type="entry name" value="YCGL"/>
    <property type="match status" value="1"/>
</dbReference>
<name>Y2423_SHEB2</name>
<proteinExistence type="inferred from homology"/>
<feature type="chain" id="PRO_0000375367" description="YcgL domain-containing protein Sbal223_2423">
    <location>
        <begin position="1"/>
        <end position="92"/>
    </location>
</feature>
<feature type="domain" description="YcgL" evidence="1">
    <location>
        <begin position="1"/>
        <end position="85"/>
    </location>
</feature>
<reference key="1">
    <citation type="submission" date="2008-12" db="EMBL/GenBank/DDBJ databases">
        <title>Complete sequence of chromosome of Shewanella baltica OS223.</title>
        <authorList>
            <consortium name="US DOE Joint Genome Institute"/>
            <person name="Lucas S."/>
            <person name="Copeland A."/>
            <person name="Lapidus A."/>
            <person name="Glavina del Rio T."/>
            <person name="Dalin E."/>
            <person name="Tice H."/>
            <person name="Bruce D."/>
            <person name="Goodwin L."/>
            <person name="Pitluck S."/>
            <person name="Chertkov O."/>
            <person name="Meincke L."/>
            <person name="Brettin T."/>
            <person name="Detter J.C."/>
            <person name="Han C."/>
            <person name="Kuske C.R."/>
            <person name="Larimer F."/>
            <person name="Land M."/>
            <person name="Hauser L."/>
            <person name="Kyrpides N."/>
            <person name="Ovchinnikova G."/>
            <person name="Brettar I."/>
            <person name="Rodrigues J."/>
            <person name="Konstantinidis K."/>
            <person name="Tiedje J."/>
        </authorList>
    </citation>
    <scope>NUCLEOTIDE SEQUENCE [LARGE SCALE GENOMIC DNA]</scope>
    <source>
        <strain>OS223</strain>
    </source>
</reference>
<organism>
    <name type="scientific">Shewanella baltica (strain OS223)</name>
    <dbReference type="NCBI Taxonomy" id="407976"/>
    <lineage>
        <taxon>Bacteria</taxon>
        <taxon>Pseudomonadati</taxon>
        <taxon>Pseudomonadota</taxon>
        <taxon>Gammaproteobacteria</taxon>
        <taxon>Alteromonadales</taxon>
        <taxon>Shewanellaceae</taxon>
        <taxon>Shewanella</taxon>
    </lineage>
</organism>